<keyword id="KW-0028">Amino-acid biosynthesis</keyword>
<keyword id="KW-0057">Aromatic amino acid biosynthesis</keyword>
<keyword id="KW-0315">Glutamine amidotransferase</keyword>
<keyword id="KW-0456">Lyase</keyword>
<keyword id="KW-1185">Reference proteome</keyword>
<keyword id="KW-0822">Tryptophan biosynthesis</keyword>
<proteinExistence type="inferred from homology"/>
<name>TRPG_THEKO</name>
<reference key="1">
    <citation type="journal article" date="1999" name="Mol. Gen. Genet.">
        <title>The tryptophan biosynthesis gene cluster trpCDEGFBA from Pyrococcus kodakaraensis KOD1 is regulated at the transcriptional level and expressed as a single mRNA.</title>
        <authorList>
            <person name="Tang X."/>
            <person name="Ezaki S."/>
            <person name="Fujiwara S."/>
            <person name="Takagi M."/>
            <person name="Atomi H."/>
            <person name="Imanaka T."/>
        </authorList>
    </citation>
    <scope>NUCLEOTIDE SEQUENCE [GENOMIC DNA]</scope>
    <source>
        <strain>ATCC BAA-918 / JCM 12380 / KOD1</strain>
    </source>
</reference>
<reference key="2">
    <citation type="journal article" date="2005" name="Genome Res.">
        <title>Complete genome sequence of the hyperthermophilic archaeon Thermococcus kodakaraensis KOD1 and comparison with Pyrococcus genomes.</title>
        <authorList>
            <person name="Fukui T."/>
            <person name="Atomi H."/>
            <person name="Kanai T."/>
            <person name="Matsumi R."/>
            <person name="Fujiwara S."/>
            <person name="Imanaka T."/>
        </authorList>
    </citation>
    <scope>NUCLEOTIDE SEQUENCE [LARGE SCALE GENOMIC DNA]</scope>
    <source>
        <strain>ATCC BAA-918 / JCM 12380 / KOD1</strain>
    </source>
</reference>
<accession>Q9YGB2</accession>
<gene>
    <name type="primary">trpG</name>
    <name type="ordered locus">TK0255</name>
</gene>
<feature type="chain" id="PRO_0000056891" description="Anthranilate synthase component 2">
    <location>
        <begin position="1"/>
        <end position="192"/>
    </location>
</feature>
<feature type="domain" description="Glutamine amidotransferase type-1" evidence="3">
    <location>
        <begin position="1"/>
        <end position="192"/>
    </location>
</feature>
<feature type="active site" description="Nucleophile; for GATase activity" evidence="3">
    <location>
        <position position="78"/>
    </location>
</feature>
<feature type="active site" description="For GATase activity" evidence="3">
    <location>
        <position position="165"/>
    </location>
</feature>
<feature type="active site" description="For GATase activity" evidence="3">
    <location>
        <position position="167"/>
    </location>
</feature>
<feature type="binding site" evidence="2">
    <location>
        <begin position="50"/>
        <end position="52"/>
    </location>
    <ligand>
        <name>L-glutamine</name>
        <dbReference type="ChEBI" id="CHEBI:58359"/>
    </ligand>
</feature>
<feature type="binding site" evidence="2">
    <location>
        <position position="82"/>
    </location>
    <ligand>
        <name>L-glutamine</name>
        <dbReference type="ChEBI" id="CHEBI:58359"/>
    </ligand>
</feature>
<feature type="binding site" evidence="2">
    <location>
        <begin position="127"/>
        <end position="128"/>
    </location>
    <ligand>
        <name>L-glutamine</name>
        <dbReference type="ChEBI" id="CHEBI:58359"/>
    </ligand>
</feature>
<organism>
    <name type="scientific">Thermococcus kodakarensis (strain ATCC BAA-918 / JCM 12380 / KOD1)</name>
    <name type="common">Pyrococcus kodakaraensis (strain KOD1)</name>
    <dbReference type="NCBI Taxonomy" id="69014"/>
    <lineage>
        <taxon>Archaea</taxon>
        <taxon>Methanobacteriati</taxon>
        <taxon>Methanobacteriota</taxon>
        <taxon>Thermococci</taxon>
        <taxon>Thermococcales</taxon>
        <taxon>Thermococcaceae</taxon>
        <taxon>Thermococcus</taxon>
    </lineage>
</organism>
<comment type="function">
    <text evidence="1">Part of a heterotetrameric complex that catalyzes the two-step biosynthesis of anthranilate, an intermediate in the biosynthesis of L-tryptophan. In the first step, the glutamine-binding beta subunit (TrpG) of anthranilate synthase (AS) provides the glutamine amidotransferase activity which generates ammonia as a substrate that, along with chorismate, is used in the second step, catalyzed by the large alpha subunit of AS (TrpE) to produce anthranilate. In the absence of TrpG, TrpE can synthesize anthranilate directly from chorismate and high concentrations of ammonia (By similarity).</text>
</comment>
<comment type="catalytic activity">
    <reaction>
        <text>chorismate + L-glutamine = anthranilate + pyruvate + L-glutamate + H(+)</text>
        <dbReference type="Rhea" id="RHEA:21732"/>
        <dbReference type="ChEBI" id="CHEBI:15361"/>
        <dbReference type="ChEBI" id="CHEBI:15378"/>
        <dbReference type="ChEBI" id="CHEBI:16567"/>
        <dbReference type="ChEBI" id="CHEBI:29748"/>
        <dbReference type="ChEBI" id="CHEBI:29985"/>
        <dbReference type="ChEBI" id="CHEBI:58359"/>
        <dbReference type="EC" id="4.1.3.27"/>
    </reaction>
</comment>
<comment type="pathway">
    <text>Amino-acid biosynthesis; L-tryptophan biosynthesis; L-tryptophan from chorismate: step 1/5.</text>
</comment>
<comment type="subunit">
    <text evidence="1">Heterotetramer consisting of two non-identical subunits: a beta subunit (TrpG) and a large alpha subunit (TrpE).</text>
</comment>
<evidence type="ECO:0000250" key="1"/>
<evidence type="ECO:0000250" key="2">
    <source>
        <dbReference type="UniProtKB" id="P00900"/>
    </source>
</evidence>
<evidence type="ECO:0000255" key="3">
    <source>
        <dbReference type="PROSITE-ProRule" id="PRU00605"/>
    </source>
</evidence>
<protein>
    <recommendedName>
        <fullName>Anthranilate synthase component 2</fullName>
        <shortName>AS</shortName>
        <shortName>ASII</shortName>
        <ecNumber>4.1.3.27</ecNumber>
    </recommendedName>
    <alternativeName>
        <fullName>Anthranilate synthase, GATase component</fullName>
    </alternativeName>
    <alternativeName>
        <fullName>Anthranilate synthase, glutamine amidotransferase component</fullName>
    </alternativeName>
</protein>
<dbReference type="EC" id="4.1.3.27"/>
<dbReference type="EMBL" id="AB030011">
    <property type="protein sequence ID" value="BAA82548.1"/>
    <property type="molecule type" value="Genomic_DNA"/>
</dbReference>
<dbReference type="EMBL" id="AP006878">
    <property type="protein sequence ID" value="BAD84444.1"/>
    <property type="molecule type" value="Genomic_DNA"/>
</dbReference>
<dbReference type="PIR" id="T43925">
    <property type="entry name" value="T43925"/>
</dbReference>
<dbReference type="RefSeq" id="WP_011249210.1">
    <property type="nucleotide sequence ID" value="NC_006624.1"/>
</dbReference>
<dbReference type="SMR" id="Q9YGB2"/>
<dbReference type="FunCoup" id="Q9YGB2">
    <property type="interactions" value="72"/>
</dbReference>
<dbReference type="STRING" id="69014.TK0255"/>
<dbReference type="MEROPS" id="C26.959"/>
<dbReference type="EnsemblBacteria" id="BAD84444">
    <property type="protein sequence ID" value="BAD84444"/>
    <property type="gene ID" value="TK0255"/>
</dbReference>
<dbReference type="GeneID" id="78446758"/>
<dbReference type="KEGG" id="tko:TK0255"/>
<dbReference type="PATRIC" id="fig|69014.16.peg.254"/>
<dbReference type="eggNOG" id="arCOG00086">
    <property type="taxonomic scope" value="Archaea"/>
</dbReference>
<dbReference type="HOGENOM" id="CLU_014340_1_2_2"/>
<dbReference type="InParanoid" id="Q9YGB2"/>
<dbReference type="OrthoDB" id="3321at2157"/>
<dbReference type="PhylomeDB" id="Q9YGB2"/>
<dbReference type="UniPathway" id="UPA00035">
    <property type="reaction ID" value="UER00040"/>
</dbReference>
<dbReference type="Proteomes" id="UP000000536">
    <property type="component" value="Chromosome"/>
</dbReference>
<dbReference type="GO" id="GO:0004049">
    <property type="term" value="F:anthranilate synthase activity"/>
    <property type="evidence" value="ECO:0007669"/>
    <property type="project" value="UniProtKB-EC"/>
</dbReference>
<dbReference type="GO" id="GO:0000162">
    <property type="term" value="P:L-tryptophan biosynthetic process"/>
    <property type="evidence" value="ECO:0000318"/>
    <property type="project" value="GO_Central"/>
</dbReference>
<dbReference type="CDD" id="cd01743">
    <property type="entry name" value="GATase1_Anthranilate_Synthase"/>
    <property type="match status" value="1"/>
</dbReference>
<dbReference type="FunFam" id="3.40.50.880:FF:000003">
    <property type="entry name" value="Anthranilate synthase component II"/>
    <property type="match status" value="1"/>
</dbReference>
<dbReference type="Gene3D" id="3.40.50.880">
    <property type="match status" value="1"/>
</dbReference>
<dbReference type="InterPro" id="IPR050472">
    <property type="entry name" value="Anth_synth/Amidotransfase"/>
</dbReference>
<dbReference type="InterPro" id="IPR029062">
    <property type="entry name" value="Class_I_gatase-like"/>
</dbReference>
<dbReference type="InterPro" id="IPR017926">
    <property type="entry name" value="GATASE"/>
</dbReference>
<dbReference type="InterPro" id="IPR006221">
    <property type="entry name" value="TrpG/PapA_dom"/>
</dbReference>
<dbReference type="NCBIfam" id="TIGR00566">
    <property type="entry name" value="trpG_papA"/>
    <property type="match status" value="1"/>
</dbReference>
<dbReference type="PANTHER" id="PTHR43418:SF4">
    <property type="entry name" value="MULTIFUNCTIONAL TRYPTOPHAN BIOSYNTHESIS PROTEIN"/>
    <property type="match status" value="1"/>
</dbReference>
<dbReference type="PANTHER" id="PTHR43418">
    <property type="entry name" value="MULTIFUNCTIONAL TRYPTOPHAN BIOSYNTHESIS PROTEIN-RELATED"/>
    <property type="match status" value="1"/>
</dbReference>
<dbReference type="Pfam" id="PF00117">
    <property type="entry name" value="GATase"/>
    <property type="match status" value="1"/>
</dbReference>
<dbReference type="PRINTS" id="PR00097">
    <property type="entry name" value="ANTSNTHASEII"/>
</dbReference>
<dbReference type="PRINTS" id="PR00099">
    <property type="entry name" value="CPSGATASE"/>
</dbReference>
<dbReference type="PRINTS" id="PR00096">
    <property type="entry name" value="GATASE"/>
</dbReference>
<dbReference type="SUPFAM" id="SSF52317">
    <property type="entry name" value="Class I glutamine amidotransferase-like"/>
    <property type="match status" value="1"/>
</dbReference>
<dbReference type="PROSITE" id="PS51273">
    <property type="entry name" value="GATASE_TYPE_1"/>
    <property type="match status" value="1"/>
</dbReference>
<sequence length="192" mass="21156">MIVLVNNRDSFVWNLAEYASLFDRVKVVPNTITVGELRRLDPDGVIISPGPGHPLERREVGNSPEIVLEAGVPILGVCLGHQIIATAFGGKVGRVKPRHGKASPVKHDGKGVLRGIKNPLTAGRYHSLAVLEVPREFDVSAVSLDDNVVMGIRHRKLPIEGLQFHPESVLTEWERKEGLRIIKNFVEMSRNG</sequence>